<sequence length="264" mass="28659">MKKITINDLMKWKQEGRKFATSTAYDASFAQLFESQEMPVLLVGDSLGMVLQGETDTLPVTVDDIAYHTRCVRKGSPNCLLMADMPFMSYATPEQACENAAKLVRAGANMVKIEGGDWLVDTVKMLTERAVPVCAHLGLTPQSVNIFGGYKVQGREQDKADRMVRDALALQEAGAQIVLLECVPAELANRITQILDVPVIGIGAGNGTDGQILVMHDMFGISANYMPKFSKNFLAETGDIRQAVAKYIEDVASGAFPDLAHTIA</sequence>
<organism>
    <name type="scientific">Vibrio cholerae serotype O1 (strain M66-2)</name>
    <dbReference type="NCBI Taxonomy" id="579112"/>
    <lineage>
        <taxon>Bacteria</taxon>
        <taxon>Pseudomonadati</taxon>
        <taxon>Pseudomonadota</taxon>
        <taxon>Gammaproteobacteria</taxon>
        <taxon>Vibrionales</taxon>
        <taxon>Vibrionaceae</taxon>
        <taxon>Vibrio</taxon>
    </lineage>
</organism>
<protein>
    <recommendedName>
        <fullName evidence="1">3-methyl-2-oxobutanoate hydroxymethyltransferase</fullName>
        <ecNumber evidence="1">2.1.2.11</ecNumber>
    </recommendedName>
    <alternativeName>
        <fullName evidence="1">Ketopantoate hydroxymethyltransferase</fullName>
        <shortName evidence="1">KPHMT</shortName>
    </alternativeName>
</protein>
<feature type="chain" id="PRO_1000123392" description="3-methyl-2-oxobutanoate hydroxymethyltransferase">
    <location>
        <begin position="1"/>
        <end position="264"/>
    </location>
</feature>
<feature type="active site" description="Proton acceptor" evidence="1">
    <location>
        <position position="181"/>
    </location>
</feature>
<feature type="binding site" evidence="1">
    <location>
        <begin position="45"/>
        <end position="46"/>
    </location>
    <ligand>
        <name>3-methyl-2-oxobutanoate</name>
        <dbReference type="ChEBI" id="CHEBI:11851"/>
    </ligand>
</feature>
<feature type="binding site" evidence="1">
    <location>
        <position position="45"/>
    </location>
    <ligand>
        <name>Mg(2+)</name>
        <dbReference type="ChEBI" id="CHEBI:18420"/>
    </ligand>
</feature>
<feature type="binding site" evidence="1">
    <location>
        <position position="84"/>
    </location>
    <ligand>
        <name>3-methyl-2-oxobutanoate</name>
        <dbReference type="ChEBI" id="CHEBI:11851"/>
    </ligand>
</feature>
<feature type="binding site" evidence="1">
    <location>
        <position position="84"/>
    </location>
    <ligand>
        <name>Mg(2+)</name>
        <dbReference type="ChEBI" id="CHEBI:18420"/>
    </ligand>
</feature>
<feature type="binding site" evidence="1">
    <location>
        <position position="112"/>
    </location>
    <ligand>
        <name>3-methyl-2-oxobutanoate</name>
        <dbReference type="ChEBI" id="CHEBI:11851"/>
    </ligand>
</feature>
<feature type="binding site" evidence="1">
    <location>
        <position position="114"/>
    </location>
    <ligand>
        <name>Mg(2+)</name>
        <dbReference type="ChEBI" id="CHEBI:18420"/>
    </ligand>
</feature>
<comment type="function">
    <text evidence="1">Catalyzes the reversible reaction in which hydroxymethyl group from 5,10-methylenetetrahydrofolate is transferred onto alpha-ketoisovalerate to form ketopantoate.</text>
</comment>
<comment type="catalytic activity">
    <reaction evidence="1">
        <text>3-methyl-2-oxobutanoate + (6R)-5,10-methylene-5,6,7,8-tetrahydrofolate + H2O = 2-dehydropantoate + (6S)-5,6,7,8-tetrahydrofolate</text>
        <dbReference type="Rhea" id="RHEA:11824"/>
        <dbReference type="ChEBI" id="CHEBI:11561"/>
        <dbReference type="ChEBI" id="CHEBI:11851"/>
        <dbReference type="ChEBI" id="CHEBI:15377"/>
        <dbReference type="ChEBI" id="CHEBI:15636"/>
        <dbReference type="ChEBI" id="CHEBI:57453"/>
        <dbReference type="EC" id="2.1.2.11"/>
    </reaction>
</comment>
<comment type="cofactor">
    <cofactor evidence="1">
        <name>Mg(2+)</name>
        <dbReference type="ChEBI" id="CHEBI:18420"/>
    </cofactor>
    <text evidence="1">Binds 1 Mg(2+) ion per subunit.</text>
</comment>
<comment type="pathway">
    <text evidence="1">Cofactor biosynthesis; (R)-pantothenate biosynthesis; (R)-pantoate from 3-methyl-2-oxobutanoate: step 1/2.</text>
</comment>
<comment type="subunit">
    <text evidence="1">Homodecamer; pentamer of dimers.</text>
</comment>
<comment type="subcellular location">
    <subcellularLocation>
        <location evidence="1">Cytoplasm</location>
    </subcellularLocation>
</comment>
<comment type="similarity">
    <text evidence="1">Belongs to the PanB family.</text>
</comment>
<name>PANB_VIBCM</name>
<keyword id="KW-0963">Cytoplasm</keyword>
<keyword id="KW-0460">Magnesium</keyword>
<keyword id="KW-0479">Metal-binding</keyword>
<keyword id="KW-0566">Pantothenate biosynthesis</keyword>
<keyword id="KW-0808">Transferase</keyword>
<dbReference type="EC" id="2.1.2.11" evidence="1"/>
<dbReference type="EMBL" id="CP001233">
    <property type="protein sequence ID" value="ACP04875.1"/>
    <property type="molecule type" value="Genomic_DNA"/>
</dbReference>
<dbReference type="RefSeq" id="WP_000724415.1">
    <property type="nucleotide sequence ID" value="NC_012578.1"/>
</dbReference>
<dbReference type="SMR" id="C3LS82"/>
<dbReference type="KEGG" id="vcm:VCM66_0550"/>
<dbReference type="HOGENOM" id="CLU_036645_1_0_6"/>
<dbReference type="UniPathway" id="UPA00028">
    <property type="reaction ID" value="UER00003"/>
</dbReference>
<dbReference type="Proteomes" id="UP000001217">
    <property type="component" value="Chromosome I"/>
</dbReference>
<dbReference type="GO" id="GO:0005737">
    <property type="term" value="C:cytoplasm"/>
    <property type="evidence" value="ECO:0007669"/>
    <property type="project" value="UniProtKB-SubCell"/>
</dbReference>
<dbReference type="GO" id="GO:0003864">
    <property type="term" value="F:3-methyl-2-oxobutanoate hydroxymethyltransferase activity"/>
    <property type="evidence" value="ECO:0007669"/>
    <property type="project" value="UniProtKB-UniRule"/>
</dbReference>
<dbReference type="GO" id="GO:0000287">
    <property type="term" value="F:magnesium ion binding"/>
    <property type="evidence" value="ECO:0007669"/>
    <property type="project" value="TreeGrafter"/>
</dbReference>
<dbReference type="GO" id="GO:0015940">
    <property type="term" value="P:pantothenate biosynthetic process"/>
    <property type="evidence" value="ECO:0007669"/>
    <property type="project" value="UniProtKB-UniRule"/>
</dbReference>
<dbReference type="CDD" id="cd06557">
    <property type="entry name" value="KPHMT-like"/>
    <property type="match status" value="1"/>
</dbReference>
<dbReference type="FunFam" id="3.20.20.60:FF:000003">
    <property type="entry name" value="3-methyl-2-oxobutanoate hydroxymethyltransferase"/>
    <property type="match status" value="1"/>
</dbReference>
<dbReference type="Gene3D" id="3.20.20.60">
    <property type="entry name" value="Phosphoenolpyruvate-binding domains"/>
    <property type="match status" value="1"/>
</dbReference>
<dbReference type="HAMAP" id="MF_00156">
    <property type="entry name" value="PanB"/>
    <property type="match status" value="1"/>
</dbReference>
<dbReference type="InterPro" id="IPR003700">
    <property type="entry name" value="Pantoate_hydroxy_MeTrfase"/>
</dbReference>
<dbReference type="InterPro" id="IPR015813">
    <property type="entry name" value="Pyrv/PenolPyrv_kinase-like_dom"/>
</dbReference>
<dbReference type="InterPro" id="IPR040442">
    <property type="entry name" value="Pyrv_kinase-like_dom_sf"/>
</dbReference>
<dbReference type="NCBIfam" id="TIGR00222">
    <property type="entry name" value="panB"/>
    <property type="match status" value="1"/>
</dbReference>
<dbReference type="NCBIfam" id="NF001452">
    <property type="entry name" value="PRK00311.1"/>
    <property type="match status" value="1"/>
</dbReference>
<dbReference type="PANTHER" id="PTHR20881">
    <property type="entry name" value="3-METHYL-2-OXOBUTANOATE HYDROXYMETHYLTRANSFERASE"/>
    <property type="match status" value="1"/>
</dbReference>
<dbReference type="PANTHER" id="PTHR20881:SF0">
    <property type="entry name" value="3-METHYL-2-OXOBUTANOATE HYDROXYMETHYLTRANSFERASE"/>
    <property type="match status" value="1"/>
</dbReference>
<dbReference type="Pfam" id="PF02548">
    <property type="entry name" value="Pantoate_transf"/>
    <property type="match status" value="1"/>
</dbReference>
<dbReference type="PIRSF" id="PIRSF000388">
    <property type="entry name" value="Pantoate_hydroxy_MeTrfase"/>
    <property type="match status" value="1"/>
</dbReference>
<dbReference type="SUPFAM" id="SSF51621">
    <property type="entry name" value="Phosphoenolpyruvate/pyruvate domain"/>
    <property type="match status" value="1"/>
</dbReference>
<evidence type="ECO:0000255" key="1">
    <source>
        <dbReference type="HAMAP-Rule" id="MF_00156"/>
    </source>
</evidence>
<gene>
    <name evidence="1" type="primary">panB</name>
    <name type="ordered locus">VCM66_0550</name>
</gene>
<accession>C3LS82</accession>
<reference key="1">
    <citation type="journal article" date="2008" name="PLoS ONE">
        <title>A recalibrated molecular clock and independent origins for the cholera pandemic clones.</title>
        <authorList>
            <person name="Feng L."/>
            <person name="Reeves P.R."/>
            <person name="Lan R."/>
            <person name="Ren Y."/>
            <person name="Gao C."/>
            <person name="Zhou Z."/>
            <person name="Ren Y."/>
            <person name="Cheng J."/>
            <person name="Wang W."/>
            <person name="Wang J."/>
            <person name="Qian W."/>
            <person name="Li D."/>
            <person name="Wang L."/>
        </authorList>
    </citation>
    <scope>NUCLEOTIDE SEQUENCE [LARGE SCALE GENOMIC DNA]</scope>
    <source>
        <strain>M66-2</strain>
    </source>
</reference>
<proteinExistence type="inferred from homology"/>